<organism>
    <name type="scientific">Oryctolagus cuniculus</name>
    <name type="common">Rabbit</name>
    <dbReference type="NCBI Taxonomy" id="9986"/>
    <lineage>
        <taxon>Eukaryota</taxon>
        <taxon>Metazoa</taxon>
        <taxon>Chordata</taxon>
        <taxon>Craniata</taxon>
        <taxon>Vertebrata</taxon>
        <taxon>Euteleostomi</taxon>
        <taxon>Mammalia</taxon>
        <taxon>Eutheria</taxon>
        <taxon>Euarchontoglires</taxon>
        <taxon>Glires</taxon>
        <taxon>Lagomorpha</taxon>
        <taxon>Leporidae</taxon>
        <taxon>Oryctolagus</taxon>
    </lineage>
</organism>
<protein>
    <recommendedName>
        <fullName>Serum amyloid A-1 protein</fullName>
    </recommendedName>
</protein>
<name>SAA1_RABIT</name>
<dbReference type="EMBL" id="S71722">
    <property type="protein sequence ID" value="AAB20616.1"/>
    <property type="molecule type" value="mRNA"/>
</dbReference>
<dbReference type="PIR" id="I46981">
    <property type="entry name" value="I46981"/>
</dbReference>
<dbReference type="RefSeq" id="NP_001075796.1">
    <property type="nucleotide sequence ID" value="NM_001082327.2"/>
</dbReference>
<dbReference type="RefSeq" id="XP_008273295.2">
    <property type="nucleotide sequence ID" value="XM_008275073.2"/>
</dbReference>
<dbReference type="RefSeq" id="XP_008273297.2">
    <property type="nucleotide sequence ID" value="XM_008275075.2"/>
</dbReference>
<dbReference type="RefSeq" id="XP_008273298.1">
    <property type="nucleotide sequence ID" value="XM_008275076.2"/>
</dbReference>
<dbReference type="SMR" id="P53614"/>
<dbReference type="STRING" id="9986.ENSOCUP00000017760"/>
<dbReference type="PaxDb" id="9986-ENSOCUP00000017760"/>
<dbReference type="GeneID" id="100009168"/>
<dbReference type="KEGG" id="ocu:100009168"/>
<dbReference type="eggNOG" id="ENOG502S4PB">
    <property type="taxonomic scope" value="Eukaryota"/>
</dbReference>
<dbReference type="InParanoid" id="P53614"/>
<dbReference type="OrthoDB" id="6112826at2759"/>
<dbReference type="TreeFam" id="TF332544"/>
<dbReference type="Proteomes" id="UP000001811">
    <property type="component" value="Unplaced"/>
</dbReference>
<dbReference type="GO" id="GO:0034364">
    <property type="term" value="C:high-density lipoprotein particle"/>
    <property type="evidence" value="ECO:0007669"/>
    <property type="project" value="UniProtKB-KW"/>
</dbReference>
<dbReference type="GO" id="GO:0008201">
    <property type="term" value="F:heparin binding"/>
    <property type="evidence" value="ECO:0007669"/>
    <property type="project" value="UniProtKB-KW"/>
</dbReference>
<dbReference type="GO" id="GO:0006953">
    <property type="term" value="P:acute-phase response"/>
    <property type="evidence" value="ECO:0007669"/>
    <property type="project" value="UniProtKB-KW"/>
</dbReference>
<dbReference type="FunFam" id="1.10.132.110:FF:000001">
    <property type="entry name" value="Serum amyloid A protein"/>
    <property type="match status" value="1"/>
</dbReference>
<dbReference type="Gene3D" id="1.10.132.110">
    <property type="entry name" value="Serum amyloid A protein"/>
    <property type="match status" value="1"/>
</dbReference>
<dbReference type="InterPro" id="IPR000096">
    <property type="entry name" value="Serum_amyloid_A"/>
</dbReference>
<dbReference type="InterPro" id="IPR052464">
    <property type="entry name" value="Synovial_Prolif_Regulator"/>
</dbReference>
<dbReference type="PANTHER" id="PTHR23424">
    <property type="entry name" value="SERUM AMYLOID A"/>
    <property type="match status" value="1"/>
</dbReference>
<dbReference type="PANTHER" id="PTHR23424:SF29">
    <property type="entry name" value="SERUM AMYLOID A PROTEIN"/>
    <property type="match status" value="1"/>
</dbReference>
<dbReference type="Pfam" id="PF00277">
    <property type="entry name" value="SAA"/>
    <property type="match status" value="1"/>
</dbReference>
<dbReference type="PIRSF" id="PIRSF002472">
    <property type="entry name" value="Serum_amyloid_A"/>
    <property type="match status" value="1"/>
</dbReference>
<dbReference type="PRINTS" id="PR00306">
    <property type="entry name" value="SERUMAMYLOID"/>
</dbReference>
<dbReference type="SMART" id="SM00197">
    <property type="entry name" value="SAA"/>
    <property type="match status" value="1"/>
</dbReference>
<dbReference type="PROSITE" id="PS00992">
    <property type="entry name" value="SAA"/>
    <property type="match status" value="1"/>
</dbReference>
<keyword id="KW-0011">Acute phase</keyword>
<keyword id="KW-0034">Amyloid</keyword>
<keyword id="KW-0345">HDL</keyword>
<keyword id="KW-0358">Heparin-binding</keyword>
<keyword id="KW-1185">Reference proteome</keyword>
<keyword id="KW-0964">Secreted</keyword>
<keyword id="KW-0732">Signal</keyword>
<sequence>MKLLSGLLLCSLVLGVSSQRWFSFIGEATQGAWDMWRAYSDMREANYINADKYFHARGNYDAAQRGPGGVWAAKVISDAREDLQRLMGHGAEDSMADQAANEWGRSGKDPNHFRPKGLPDKY</sequence>
<accession>P53614</accession>
<reference key="1">
    <citation type="journal article" date="1991" name="Scand. J. Immunol.">
        <title>Rabbit serum amyloid protein A: expression and primary structure deduced from cDNA sequences.</title>
        <authorList>
            <person name="Rygg M."/>
            <person name="Marhaug G."/>
            <person name="Husby G."/>
            <person name="Dowton S.B."/>
        </authorList>
    </citation>
    <scope>NUCLEOTIDE SEQUENCE [MRNA]</scope>
    <scope>TISSUE SPECIFICITY</scope>
    <scope>INDUCTION BY INFLAMMATORY STIMULI</scope>
</reference>
<feature type="signal peptide" evidence="1">
    <location>
        <begin position="1"/>
        <end position="19"/>
    </location>
</feature>
<feature type="chain" id="PRO_0000031596" description="Serum amyloid A-1 protein">
    <location>
        <begin position="20"/>
        <end position="122"/>
    </location>
</feature>
<feature type="region of interest" description="Important for amyloid formation" evidence="1">
    <location>
        <begin position="20"/>
        <end position="45"/>
    </location>
</feature>
<feature type="region of interest" description="Disordered" evidence="2">
    <location>
        <begin position="87"/>
        <end position="122"/>
    </location>
</feature>
<feature type="compositionally biased region" description="Basic and acidic residues" evidence="2">
    <location>
        <begin position="105"/>
        <end position="122"/>
    </location>
</feature>
<evidence type="ECO:0000250" key="1"/>
<evidence type="ECO:0000256" key="2">
    <source>
        <dbReference type="SAM" id="MobiDB-lite"/>
    </source>
</evidence>
<evidence type="ECO:0000269" key="3">
    <source>
    </source>
</evidence>
<evidence type="ECO:0000305" key="4"/>
<comment type="function">
    <text evidence="1">Major acute phase protein.</text>
</comment>
<comment type="subunit">
    <text evidence="1">Homohexamer; dimer of trimers. Can form amyloid fibrils after partial proteolysis; the native, undenatured protein does not form amyloid fibrils (in vitro). Apolipoprotein of the HDL complex. Binds to heparin (By similarity).</text>
</comment>
<comment type="subcellular location">
    <subcellularLocation>
        <location evidence="1">Secreted</location>
    </subcellularLocation>
</comment>
<comment type="tissue specificity">
    <text evidence="3">Detected in liver.</text>
</comment>
<comment type="induction">
    <text evidence="3">Up-regulated by inflammatory stimuli.</text>
</comment>
<comment type="disease">
    <text>Reactive, secondary amyloidosis is characterized by the extracellular accumulation in various tissues of the SAA protein. These deposits are highly insoluble and resistant to proteolysis; they disrupt tissue structure and compromise function.</text>
</comment>
<comment type="similarity">
    <text evidence="4">Belongs to the SAA family.</text>
</comment>
<gene>
    <name type="primary">SAA1</name>
</gene>
<proteinExistence type="evidence at transcript level"/>